<dbReference type="EMBL" id="CU928164">
    <property type="protein sequence ID" value="CAR18242.1"/>
    <property type="molecule type" value="Genomic_DNA"/>
</dbReference>
<dbReference type="RefSeq" id="WP_001300662.1">
    <property type="nucleotide sequence ID" value="NC_011750.1"/>
</dbReference>
<dbReference type="RefSeq" id="YP_002408078.1">
    <property type="nucleotide sequence ID" value="NC_011750.1"/>
</dbReference>
<dbReference type="SMR" id="B7NL86"/>
<dbReference type="STRING" id="585057.ECIAI39_2115"/>
<dbReference type="GeneID" id="93776366"/>
<dbReference type="KEGG" id="ect:ECIAI39_2115"/>
<dbReference type="PATRIC" id="fig|585057.6.peg.2197"/>
<dbReference type="HOGENOM" id="CLU_023403_2_0_6"/>
<dbReference type="UniPathway" id="UPA00637"/>
<dbReference type="Proteomes" id="UP000000749">
    <property type="component" value="Chromosome"/>
</dbReference>
<dbReference type="GO" id="GO:0030288">
    <property type="term" value="C:outer membrane-bounded periplasmic space"/>
    <property type="evidence" value="ECO:0007669"/>
    <property type="project" value="TreeGrafter"/>
</dbReference>
<dbReference type="GO" id="GO:0030246">
    <property type="term" value="F:carbohydrate binding"/>
    <property type="evidence" value="ECO:0007669"/>
    <property type="project" value="InterPro"/>
</dbReference>
<dbReference type="GO" id="GO:0003824">
    <property type="term" value="F:catalytic activity"/>
    <property type="evidence" value="ECO:0007669"/>
    <property type="project" value="InterPro"/>
</dbReference>
<dbReference type="GO" id="GO:0051274">
    <property type="term" value="P:beta-glucan biosynthetic process"/>
    <property type="evidence" value="ECO:0007669"/>
    <property type="project" value="TreeGrafter"/>
</dbReference>
<dbReference type="FunFam" id="2.60.40.10:FF:000294">
    <property type="entry name" value="Glucans biosynthesis protein G"/>
    <property type="match status" value="1"/>
</dbReference>
<dbReference type="FunFam" id="2.70.98.10:FF:000001">
    <property type="entry name" value="Glucans biosynthesis protein G"/>
    <property type="match status" value="1"/>
</dbReference>
<dbReference type="Gene3D" id="2.70.98.10">
    <property type="match status" value="1"/>
</dbReference>
<dbReference type="Gene3D" id="2.60.40.10">
    <property type="entry name" value="Immunoglobulins"/>
    <property type="match status" value="1"/>
</dbReference>
<dbReference type="HAMAP" id="MF_01069">
    <property type="entry name" value="MdoG_OpgG"/>
    <property type="match status" value="1"/>
</dbReference>
<dbReference type="InterPro" id="IPR011013">
    <property type="entry name" value="Gal_mutarotase_sf_dom"/>
</dbReference>
<dbReference type="InterPro" id="IPR014718">
    <property type="entry name" value="GH-type_carb-bd"/>
</dbReference>
<dbReference type="InterPro" id="IPR014438">
    <property type="entry name" value="Glucan_biosyn_MdoG/MdoD"/>
</dbReference>
<dbReference type="InterPro" id="IPR007444">
    <property type="entry name" value="Glucan_biosyn_MdoG_C"/>
</dbReference>
<dbReference type="InterPro" id="IPR013783">
    <property type="entry name" value="Ig-like_fold"/>
</dbReference>
<dbReference type="InterPro" id="IPR014756">
    <property type="entry name" value="Ig_E-set"/>
</dbReference>
<dbReference type="InterPro" id="IPR023704">
    <property type="entry name" value="MdoG_OpgG"/>
</dbReference>
<dbReference type="PANTHER" id="PTHR30504">
    <property type="entry name" value="GLUCANS BIOSYNTHESIS PROTEIN"/>
    <property type="match status" value="1"/>
</dbReference>
<dbReference type="PANTHER" id="PTHR30504:SF4">
    <property type="entry name" value="GLUCANS BIOSYNTHESIS PROTEIN G"/>
    <property type="match status" value="1"/>
</dbReference>
<dbReference type="Pfam" id="PF04349">
    <property type="entry name" value="MdoG"/>
    <property type="match status" value="1"/>
</dbReference>
<dbReference type="PIRSF" id="PIRSF006281">
    <property type="entry name" value="MdoG"/>
    <property type="match status" value="1"/>
</dbReference>
<dbReference type="SUPFAM" id="SSF81296">
    <property type="entry name" value="E set domains"/>
    <property type="match status" value="1"/>
</dbReference>
<dbReference type="SUPFAM" id="SSF74650">
    <property type="entry name" value="Galactose mutarotase-like"/>
    <property type="match status" value="1"/>
</dbReference>
<gene>
    <name evidence="1" type="primary">mdoG</name>
    <name evidence="1" type="synonym">opgG</name>
    <name type="ordered locus">ECIAI39_2115</name>
</gene>
<reference key="1">
    <citation type="journal article" date="2009" name="PLoS Genet.">
        <title>Organised genome dynamics in the Escherichia coli species results in highly diverse adaptive paths.</title>
        <authorList>
            <person name="Touchon M."/>
            <person name="Hoede C."/>
            <person name="Tenaillon O."/>
            <person name="Barbe V."/>
            <person name="Baeriswyl S."/>
            <person name="Bidet P."/>
            <person name="Bingen E."/>
            <person name="Bonacorsi S."/>
            <person name="Bouchier C."/>
            <person name="Bouvet O."/>
            <person name="Calteau A."/>
            <person name="Chiapello H."/>
            <person name="Clermont O."/>
            <person name="Cruveiller S."/>
            <person name="Danchin A."/>
            <person name="Diard M."/>
            <person name="Dossat C."/>
            <person name="Karoui M.E."/>
            <person name="Frapy E."/>
            <person name="Garry L."/>
            <person name="Ghigo J.M."/>
            <person name="Gilles A.M."/>
            <person name="Johnson J."/>
            <person name="Le Bouguenec C."/>
            <person name="Lescat M."/>
            <person name="Mangenot S."/>
            <person name="Martinez-Jehanne V."/>
            <person name="Matic I."/>
            <person name="Nassif X."/>
            <person name="Oztas S."/>
            <person name="Petit M.A."/>
            <person name="Pichon C."/>
            <person name="Rouy Z."/>
            <person name="Ruf C.S."/>
            <person name="Schneider D."/>
            <person name="Tourret J."/>
            <person name="Vacherie B."/>
            <person name="Vallenet D."/>
            <person name="Medigue C."/>
            <person name="Rocha E.P.C."/>
            <person name="Denamur E."/>
        </authorList>
    </citation>
    <scope>NUCLEOTIDE SEQUENCE [LARGE SCALE GENOMIC DNA]</scope>
    <source>
        <strain>IAI39 / ExPEC</strain>
    </source>
</reference>
<proteinExistence type="inferred from homology"/>
<protein>
    <recommendedName>
        <fullName evidence="1">Glucans biosynthesis protein G</fullName>
    </recommendedName>
</protein>
<organism>
    <name type="scientific">Escherichia coli O7:K1 (strain IAI39 / ExPEC)</name>
    <dbReference type="NCBI Taxonomy" id="585057"/>
    <lineage>
        <taxon>Bacteria</taxon>
        <taxon>Pseudomonadati</taxon>
        <taxon>Pseudomonadota</taxon>
        <taxon>Gammaproteobacteria</taxon>
        <taxon>Enterobacterales</taxon>
        <taxon>Enterobacteriaceae</taxon>
        <taxon>Escherichia</taxon>
    </lineage>
</organism>
<accession>B7NL86</accession>
<name>OPGG_ECO7I</name>
<evidence type="ECO:0000255" key="1">
    <source>
        <dbReference type="HAMAP-Rule" id="MF_01069"/>
    </source>
</evidence>
<keyword id="KW-0574">Periplasm</keyword>
<keyword id="KW-0732">Signal</keyword>
<feature type="signal peptide" evidence="1">
    <location>
        <begin position="1"/>
        <end position="22"/>
    </location>
</feature>
<feature type="chain" id="PRO_1000136609" description="Glucans biosynthesis protein G">
    <location>
        <begin position="23"/>
        <end position="511"/>
    </location>
</feature>
<sequence length="511" mass="57882">MMKMRWLSAAVMLTLYTSSSWAFSIDDVAKQAQSLAGKGYEAPKSNLPSVFRDMKYADYQQIQFNHDKAYWNNLKTPFKLEFYHQGMYFDTPVKINEVTATAVKRIKYSPDYFTFGDVQHDKDTVKDLGFAGFKVLYPINSKDKNDEIVSMLGASYFRVIGAGQVYGLSARGLAIDTALPSGEEFPRFKEFWIERPKPTDKRLTIYALLDSPRATGAYKFVVMPGRDTVVDVQSKIYLRDKVGKLGVAPLTSMFLFGPNQPSPANNYRPELHDSNGLSIHAGNGEWIWRPLNNPKHLAVSSFSMENPQGFGLLQRGRDFSRFEDLDDRYDLRPSAWVTPKGEWGKGSVELVEIPTNDETNDNIVAYWTPDQLPEPGKEMNFKYTITFSRDEDKLHAPDNAWVQQTRRSTGDVKQSNLIRQPDGTIAFVVDFTGAEMKKLPEDTPVTAQTSIGDNGEIVESTVRYNPVTKGWRLVMRVKVKDAKKTTEMRAALVNADQTLSETWSYQLPANE</sequence>
<comment type="function">
    <text evidence="1">Involved in the biosynthesis of osmoregulated periplasmic glucans (OPGs).</text>
</comment>
<comment type="pathway">
    <text evidence="1">Glycan metabolism; osmoregulated periplasmic glucan (OPG) biosynthesis.</text>
</comment>
<comment type="subcellular location">
    <subcellularLocation>
        <location evidence="1">Periplasm</location>
    </subcellularLocation>
</comment>
<comment type="similarity">
    <text evidence="1">Belongs to the OpgD/OpgG family.</text>
</comment>